<reference key="1">
    <citation type="journal article" date="1996" name="J. Bacteriol.">
        <title>Evidence that the hanA gene coding for HU protein is essential for heterocyst differentiation in, and cyanophage A-4(L) sensitivity of, Anabaena sp. strain PCC 7120.</title>
        <authorList>
            <person name="Khudyakov I."/>
            <person name="Wolk C.P."/>
        </authorList>
    </citation>
    <scope>NUCLEOTIDE SEQUENCE [GENOMIC DNA]</scope>
</reference>
<reference key="2">
    <citation type="journal article" date="1994" name="Biochimie">
        <title>Protein HU from the cyanobacterium Anabaena.</title>
        <authorList>
            <person name="Nagaraja R."/>
            <person name="Haselkorn R."/>
        </authorList>
    </citation>
    <scope>NUCLEOTIDE SEQUENCE [GENOMIC DNA]</scope>
    <scope>PROTEIN SEQUENCE</scope>
</reference>
<reference key="3">
    <citation type="journal article" date="2001" name="DNA Res.">
        <title>Complete genomic sequence of the filamentous nitrogen-fixing cyanobacterium Anabaena sp. strain PCC 7120.</title>
        <authorList>
            <person name="Kaneko T."/>
            <person name="Nakamura Y."/>
            <person name="Wolk C.P."/>
            <person name="Kuritz T."/>
            <person name="Sasamoto S."/>
            <person name="Watanabe A."/>
            <person name="Iriguchi M."/>
            <person name="Ishikawa A."/>
            <person name="Kawashima K."/>
            <person name="Kimura T."/>
            <person name="Kishida Y."/>
            <person name="Kohara M."/>
            <person name="Matsumoto M."/>
            <person name="Matsuno A."/>
            <person name="Muraki A."/>
            <person name="Nakazaki N."/>
            <person name="Shimpo S."/>
            <person name="Sugimoto M."/>
            <person name="Takazawa M."/>
            <person name="Yamada M."/>
            <person name="Yasuda M."/>
            <person name="Tabata S."/>
        </authorList>
    </citation>
    <scope>NUCLEOTIDE SEQUENCE [LARGE SCALE GENOMIC DNA]</scope>
    <source>
        <strain>PCC 7120 / SAG 25.82 / UTEX 2576</strain>
    </source>
</reference>
<reference key="4">
    <citation type="unpublished observations" date="1984-05">
        <authorList>
            <person name="Greene J.R."/>
        </authorList>
    </citation>
    <scope>PROTEIN SEQUENCE</scope>
</reference>
<feature type="chain" id="PRO_0000104906" description="DNA-binding protein HU">
    <location>
        <begin position="1"/>
        <end position="94"/>
    </location>
</feature>
<feature type="sequence conflict" description="In Ref. 4; AA sequence." evidence="1" ref="4">
    <original>S</original>
    <variation>R</variation>
    <location>
        <position position="38"/>
    </location>
</feature>
<feature type="helix" evidence="2">
    <location>
        <begin position="3"/>
        <end position="14"/>
    </location>
</feature>
<feature type="helix" evidence="2">
    <location>
        <begin position="18"/>
        <end position="37"/>
    </location>
</feature>
<feature type="strand" evidence="2">
    <location>
        <begin position="42"/>
        <end position="44"/>
    </location>
</feature>
<feature type="turn" evidence="2">
    <location>
        <begin position="45"/>
        <end position="47"/>
    </location>
</feature>
<feature type="strand" evidence="2">
    <location>
        <begin position="48"/>
        <end position="55"/>
    </location>
</feature>
<feature type="strand" evidence="2">
    <location>
        <begin position="58"/>
        <end position="61"/>
    </location>
</feature>
<feature type="turn" evidence="2">
    <location>
        <begin position="63"/>
        <end position="65"/>
    </location>
</feature>
<feature type="strand" evidence="2">
    <location>
        <begin position="68"/>
        <end position="71"/>
    </location>
</feature>
<feature type="strand" evidence="2">
    <location>
        <begin position="74"/>
        <end position="81"/>
    </location>
</feature>
<feature type="helix" evidence="2">
    <location>
        <begin position="83"/>
        <end position="89"/>
    </location>
</feature>
<organism>
    <name type="scientific">Nostoc sp. (strain PCC 7120 / SAG 25.82 / UTEX 2576)</name>
    <dbReference type="NCBI Taxonomy" id="103690"/>
    <lineage>
        <taxon>Bacteria</taxon>
        <taxon>Bacillati</taxon>
        <taxon>Cyanobacteriota</taxon>
        <taxon>Cyanophyceae</taxon>
        <taxon>Nostocales</taxon>
        <taxon>Nostocaceae</taxon>
        <taxon>Nostoc</taxon>
    </lineage>
</organism>
<gene>
    <name type="primary">hup</name>
    <name type="synonym">hanA</name>
    <name type="ordered locus">asr3935</name>
</gene>
<protein>
    <recommendedName>
        <fullName>DNA-binding protein HU</fullName>
    </recommendedName>
</protein>
<comment type="function">
    <text>Histone-like DNA-binding protein which is capable of wrapping DNA to stabilize it, and thus to prevent its denaturation under extreme environmental conditions. It is essential for heterocyst differentiation.</text>
</comment>
<comment type="subunit">
    <text>Homodimer.</text>
</comment>
<comment type="similarity">
    <text evidence="1">Belongs to the bacterial histone-like protein family.</text>
</comment>
<proteinExistence type="evidence at protein level"/>
<accession>P05514</accession>
<accession>Q57356</accession>
<name>DBH_NOSS1</name>
<sequence length="94" mass="10073">MNKGELVDAVAEKASVTKKQADAVLTAALETIIEAVSSGDKVTLVGFGSFESRERKAREGRNPKTNEKMEIPATRVPAFSAGKLFREKVAPPKA</sequence>
<dbReference type="EMBL" id="U46038">
    <property type="protein sequence ID" value="AAB06445.1"/>
    <property type="molecule type" value="Genomic_DNA"/>
</dbReference>
<dbReference type="EMBL" id="S78244">
    <property type="protein sequence ID" value="AAB34352.1"/>
    <property type="molecule type" value="Genomic_DNA"/>
</dbReference>
<dbReference type="EMBL" id="BA000019">
    <property type="protein sequence ID" value="BAB75634.1"/>
    <property type="molecule type" value="Genomic_DNA"/>
</dbReference>
<dbReference type="PIR" id="AH2297">
    <property type="entry name" value="AH2297"/>
</dbReference>
<dbReference type="RefSeq" id="WP_010998076.1">
    <property type="nucleotide sequence ID" value="NZ_RSCN01000045.1"/>
</dbReference>
<dbReference type="PDB" id="1P51">
    <property type="method" value="X-ray"/>
    <property type="resolution" value="2.50 A"/>
    <property type="chains" value="A/B/C/D=1-94"/>
</dbReference>
<dbReference type="PDB" id="1P71">
    <property type="method" value="X-ray"/>
    <property type="resolution" value="1.90 A"/>
    <property type="chains" value="A/B=1-94"/>
</dbReference>
<dbReference type="PDB" id="1P78">
    <property type="method" value="X-ray"/>
    <property type="resolution" value="2.25 A"/>
    <property type="chains" value="A/B=1-94"/>
</dbReference>
<dbReference type="PDBsum" id="1P51"/>
<dbReference type="PDBsum" id="1P71"/>
<dbReference type="PDBsum" id="1P78"/>
<dbReference type="SMR" id="P05514"/>
<dbReference type="STRING" id="103690.gene:10495977"/>
<dbReference type="KEGG" id="ana:asr3935"/>
<dbReference type="eggNOG" id="COG0776">
    <property type="taxonomic scope" value="Bacteria"/>
</dbReference>
<dbReference type="OrthoDB" id="9799835at2"/>
<dbReference type="EvolutionaryTrace" id="P05514"/>
<dbReference type="Proteomes" id="UP000002483">
    <property type="component" value="Chromosome"/>
</dbReference>
<dbReference type="GO" id="GO:0005829">
    <property type="term" value="C:cytosol"/>
    <property type="evidence" value="ECO:0007669"/>
    <property type="project" value="TreeGrafter"/>
</dbReference>
<dbReference type="GO" id="GO:0003677">
    <property type="term" value="F:DNA binding"/>
    <property type="evidence" value="ECO:0007669"/>
    <property type="project" value="UniProtKB-KW"/>
</dbReference>
<dbReference type="GO" id="GO:0030527">
    <property type="term" value="F:structural constituent of chromatin"/>
    <property type="evidence" value="ECO:0007669"/>
    <property type="project" value="InterPro"/>
</dbReference>
<dbReference type="GO" id="GO:0030261">
    <property type="term" value="P:chromosome condensation"/>
    <property type="evidence" value="ECO:0007669"/>
    <property type="project" value="UniProtKB-KW"/>
</dbReference>
<dbReference type="GO" id="GO:0043158">
    <property type="term" value="P:heterocyst development"/>
    <property type="evidence" value="ECO:0007669"/>
    <property type="project" value="UniProtKB-KW"/>
</dbReference>
<dbReference type="CDD" id="cd13831">
    <property type="entry name" value="HU"/>
    <property type="match status" value="1"/>
</dbReference>
<dbReference type="Gene3D" id="4.10.520.10">
    <property type="entry name" value="IHF-like DNA-binding proteins"/>
    <property type="match status" value="1"/>
</dbReference>
<dbReference type="InterPro" id="IPR000119">
    <property type="entry name" value="Hist_DNA-bd"/>
</dbReference>
<dbReference type="InterPro" id="IPR020816">
    <property type="entry name" value="Histone-like_DNA-bd_CS"/>
</dbReference>
<dbReference type="InterPro" id="IPR010992">
    <property type="entry name" value="IHF-like_DNA-bd_dom_sf"/>
</dbReference>
<dbReference type="PANTHER" id="PTHR33175">
    <property type="entry name" value="DNA-BINDING PROTEIN HU"/>
    <property type="match status" value="1"/>
</dbReference>
<dbReference type="PANTHER" id="PTHR33175:SF3">
    <property type="entry name" value="DNA-BINDING PROTEIN HU-BETA"/>
    <property type="match status" value="1"/>
</dbReference>
<dbReference type="Pfam" id="PF00216">
    <property type="entry name" value="Bac_DNA_binding"/>
    <property type="match status" value="1"/>
</dbReference>
<dbReference type="PRINTS" id="PR01727">
    <property type="entry name" value="DNABINDINGHU"/>
</dbReference>
<dbReference type="SMART" id="SM00411">
    <property type="entry name" value="BHL"/>
    <property type="match status" value="1"/>
</dbReference>
<dbReference type="SUPFAM" id="SSF47729">
    <property type="entry name" value="IHF-like DNA-binding proteins"/>
    <property type="match status" value="1"/>
</dbReference>
<dbReference type="PROSITE" id="PS00045">
    <property type="entry name" value="HISTONE_LIKE"/>
    <property type="match status" value="1"/>
</dbReference>
<evidence type="ECO:0000305" key="1"/>
<evidence type="ECO:0007829" key="2">
    <source>
        <dbReference type="PDB" id="1P71"/>
    </source>
</evidence>
<keyword id="KW-0002">3D-structure</keyword>
<keyword id="KW-0903">Direct protein sequencing</keyword>
<keyword id="KW-0226">DNA condensation</keyword>
<keyword id="KW-0238">DNA-binding</keyword>
<keyword id="KW-0364">Heterocyst</keyword>
<keyword id="KW-1185">Reference proteome</keyword>